<keyword id="KW-1185">Reference proteome</keyword>
<dbReference type="EMBL" id="L09228">
    <property type="protein sequence ID" value="AAA67480.1"/>
    <property type="molecule type" value="Genomic_DNA"/>
</dbReference>
<dbReference type="EMBL" id="AL009126">
    <property type="status" value="NOT_ANNOTATED_CDS"/>
    <property type="molecule type" value="Genomic_DNA"/>
</dbReference>
<dbReference type="PIR" id="PN0101">
    <property type="entry name" value="PN0101"/>
</dbReference>
<dbReference type="FunCoup" id="P35153">
    <property type="interactions" value="22"/>
</dbReference>
<dbReference type="InParanoid" id="P35153"/>
<dbReference type="Proteomes" id="UP000001570">
    <property type="component" value="Chromosome"/>
</dbReference>
<reference key="1">
    <citation type="journal article" date="1993" name="Mol. Microbiol.">
        <title>The organization of the Bacillus subtilis 168 chromosome region between the spoVA and serA genetic loci, based on sequence data.</title>
        <authorList>
            <person name="Sorokin A.V."/>
            <person name="Zumstein E."/>
            <person name="Azevedo V."/>
            <person name="Ehrlich S.D."/>
            <person name="Serror P."/>
        </authorList>
    </citation>
    <scope>NUCLEOTIDE SEQUENCE [GENOMIC DNA]</scope>
    <source>
        <strain>168 / Marburg / ATCC 6051 / DSM 10 / JCM 1465 / NBRC 13719 / NCIMB 3610 / NRRL NRS-744 / VKM B-501</strain>
    </source>
</reference>
<reference key="2">
    <citation type="thesis" date="1989" institute="USSR Academy of Sciences" country="Russia">
        <authorList>
            <person name="Mironov V.N."/>
        </authorList>
    </citation>
    <scope>NUCLEOTIDE SEQUENCE [GENOMIC DNA]</scope>
    <source>
        <strain>168 / SHGW</strain>
    </source>
</reference>
<reference key="3">
    <citation type="journal article" date="1990" name="Mol. Biol. (Mosk.)">
        <title>Unusual structure of the regulatory region of the riboflavin biosynthesis operon in Bacillus subtilis.</title>
        <authorList>
            <person name="Mironov V.N."/>
            <person name="Perumov D.A."/>
            <person name="Kraev A.S."/>
            <person name="Stepanov A.I."/>
            <person name="Skriabin K.G."/>
        </authorList>
    </citation>
    <scope>NUCLEOTIDE SEQUENCE [GENOMIC DNA]</scope>
</reference>
<reference key="4">
    <citation type="journal article" date="1997" name="Nature">
        <title>The complete genome sequence of the Gram-positive bacterium Bacillus subtilis.</title>
        <authorList>
            <person name="Kunst F."/>
            <person name="Ogasawara N."/>
            <person name="Moszer I."/>
            <person name="Albertini A.M."/>
            <person name="Alloni G."/>
            <person name="Azevedo V."/>
            <person name="Bertero M.G."/>
            <person name="Bessieres P."/>
            <person name="Bolotin A."/>
            <person name="Borchert S."/>
            <person name="Borriss R."/>
            <person name="Boursier L."/>
            <person name="Brans A."/>
            <person name="Braun M."/>
            <person name="Brignell S.C."/>
            <person name="Bron S."/>
            <person name="Brouillet S."/>
            <person name="Bruschi C.V."/>
            <person name="Caldwell B."/>
            <person name="Capuano V."/>
            <person name="Carter N.M."/>
            <person name="Choi S.-K."/>
            <person name="Codani J.-J."/>
            <person name="Connerton I.F."/>
            <person name="Cummings N.J."/>
            <person name="Daniel R.A."/>
            <person name="Denizot F."/>
            <person name="Devine K.M."/>
            <person name="Duesterhoeft A."/>
            <person name="Ehrlich S.D."/>
            <person name="Emmerson P.T."/>
            <person name="Entian K.-D."/>
            <person name="Errington J."/>
            <person name="Fabret C."/>
            <person name="Ferrari E."/>
            <person name="Foulger D."/>
            <person name="Fritz C."/>
            <person name="Fujita M."/>
            <person name="Fujita Y."/>
            <person name="Fuma S."/>
            <person name="Galizzi A."/>
            <person name="Galleron N."/>
            <person name="Ghim S.-Y."/>
            <person name="Glaser P."/>
            <person name="Goffeau A."/>
            <person name="Golightly E.J."/>
            <person name="Grandi G."/>
            <person name="Guiseppi G."/>
            <person name="Guy B.J."/>
            <person name="Haga K."/>
            <person name="Haiech J."/>
            <person name="Harwood C.R."/>
            <person name="Henaut A."/>
            <person name="Hilbert H."/>
            <person name="Holsappel S."/>
            <person name="Hosono S."/>
            <person name="Hullo M.-F."/>
            <person name="Itaya M."/>
            <person name="Jones L.-M."/>
            <person name="Joris B."/>
            <person name="Karamata D."/>
            <person name="Kasahara Y."/>
            <person name="Klaerr-Blanchard M."/>
            <person name="Klein C."/>
            <person name="Kobayashi Y."/>
            <person name="Koetter P."/>
            <person name="Koningstein G."/>
            <person name="Krogh S."/>
            <person name="Kumano M."/>
            <person name="Kurita K."/>
            <person name="Lapidus A."/>
            <person name="Lardinois S."/>
            <person name="Lauber J."/>
            <person name="Lazarevic V."/>
            <person name="Lee S.-M."/>
            <person name="Levine A."/>
            <person name="Liu H."/>
            <person name="Masuda S."/>
            <person name="Mauel C."/>
            <person name="Medigue C."/>
            <person name="Medina N."/>
            <person name="Mellado R.P."/>
            <person name="Mizuno M."/>
            <person name="Moestl D."/>
            <person name="Nakai S."/>
            <person name="Noback M."/>
            <person name="Noone D."/>
            <person name="O'Reilly M."/>
            <person name="Ogawa K."/>
            <person name="Ogiwara A."/>
            <person name="Oudega B."/>
            <person name="Park S.-H."/>
            <person name="Parro V."/>
            <person name="Pohl T.M."/>
            <person name="Portetelle D."/>
            <person name="Porwollik S."/>
            <person name="Prescott A.M."/>
            <person name="Presecan E."/>
            <person name="Pujic P."/>
            <person name="Purnelle B."/>
            <person name="Rapoport G."/>
            <person name="Rey M."/>
            <person name="Reynolds S."/>
            <person name="Rieger M."/>
            <person name="Rivolta C."/>
            <person name="Rocha E."/>
            <person name="Roche B."/>
            <person name="Rose M."/>
            <person name="Sadaie Y."/>
            <person name="Sato T."/>
            <person name="Scanlan E."/>
            <person name="Schleich S."/>
            <person name="Schroeter R."/>
            <person name="Scoffone F."/>
            <person name="Sekiguchi J."/>
            <person name="Sekowska A."/>
            <person name="Seror S.J."/>
            <person name="Serror P."/>
            <person name="Shin B.-S."/>
            <person name="Soldo B."/>
            <person name="Sorokin A."/>
            <person name="Tacconi E."/>
            <person name="Takagi T."/>
            <person name="Takahashi H."/>
            <person name="Takemaru K."/>
            <person name="Takeuchi M."/>
            <person name="Tamakoshi A."/>
            <person name="Tanaka T."/>
            <person name="Terpstra P."/>
            <person name="Tognoni A."/>
            <person name="Tosato V."/>
            <person name="Uchiyama S."/>
            <person name="Vandenbol M."/>
            <person name="Vannier F."/>
            <person name="Vassarotti A."/>
            <person name="Viari A."/>
            <person name="Wambutt R."/>
            <person name="Wedler E."/>
            <person name="Wedler H."/>
            <person name="Weitzenegger T."/>
            <person name="Winters P."/>
            <person name="Wipat A."/>
            <person name="Yamamoto H."/>
            <person name="Yamane K."/>
            <person name="Yasumoto K."/>
            <person name="Yata K."/>
            <person name="Yoshida K."/>
            <person name="Yoshikawa H.-F."/>
            <person name="Zumstein E."/>
            <person name="Yoshikawa H."/>
            <person name="Danchin A."/>
        </authorList>
    </citation>
    <scope>NUCLEOTIDE SEQUENCE [LARGE SCALE GENOMIC DNA]</scope>
    <source>
        <strain>168</strain>
    </source>
</reference>
<feature type="chain" id="PRO_0000049730" description="Uncharacterized protein YpuE">
    <location>
        <begin position="1"/>
        <end position="50"/>
    </location>
</feature>
<accession>P35153</accession>
<sequence length="50" mass="5950">MMSRYAKCLKMHSVISYCVKYLKPRIFYKFGAFLTVNNKRGEGNKWKSII</sequence>
<proteinExistence type="predicted"/>
<name>YPUE_BACSU</name>
<gene>
    <name type="primary">ypuE</name>
    <name type="ordered locus">BSU23290</name>
</gene>
<protein>
    <recommendedName>
        <fullName>Uncharacterized protein YpuE</fullName>
    </recommendedName>
    <alternativeName>
        <fullName>ORFX5</fullName>
    </alternativeName>
</protein>
<organism>
    <name type="scientific">Bacillus subtilis (strain 168)</name>
    <dbReference type="NCBI Taxonomy" id="224308"/>
    <lineage>
        <taxon>Bacteria</taxon>
        <taxon>Bacillati</taxon>
        <taxon>Bacillota</taxon>
        <taxon>Bacilli</taxon>
        <taxon>Bacillales</taxon>
        <taxon>Bacillaceae</taxon>
        <taxon>Bacillus</taxon>
    </lineage>
</organism>